<name>HIS8_ACIBS</name>
<sequence length="361" mass="40403">MTVSTAQMRFWSPEVRELEPYVPGEQPKIQNLLKLNTNENPYPPSPKVVEAVQAVLHEQADALRLYPDPDATALKQAIAKQQNIDVSQVFVGNGSDEVLAHIFKAFFLQDEPILYPDITYSFYPVYSQFFGTKTKEIPLNENFEIDVRDYTQPNGGVIITNPNAPTSIALSLAEIEQVLQANPDCVVVIDEAYVDFGAESAVSLINRYENLVVCQTTSKSRSLAGLRVGFAIAQSHLIAALEAVKNSFNSYPIDRFAIAAAVASFEDQAYFEEQCQKVITSREKLVRDLTELGFNVLPSKANFIFATHSQHDAGQLAQKLREQGIIVRYFNKPRINQFLRITVGTDEQNARLVQTLKQDIL</sequence>
<comment type="catalytic activity">
    <reaction evidence="1">
        <text>L-histidinol phosphate + 2-oxoglutarate = 3-(imidazol-4-yl)-2-oxopropyl phosphate + L-glutamate</text>
        <dbReference type="Rhea" id="RHEA:23744"/>
        <dbReference type="ChEBI" id="CHEBI:16810"/>
        <dbReference type="ChEBI" id="CHEBI:29985"/>
        <dbReference type="ChEBI" id="CHEBI:57766"/>
        <dbReference type="ChEBI" id="CHEBI:57980"/>
        <dbReference type="EC" id="2.6.1.9"/>
    </reaction>
</comment>
<comment type="cofactor">
    <cofactor evidence="1">
        <name>pyridoxal 5'-phosphate</name>
        <dbReference type="ChEBI" id="CHEBI:597326"/>
    </cofactor>
</comment>
<comment type="pathway">
    <text evidence="1">Amino-acid biosynthesis; L-histidine biosynthesis; L-histidine from 5-phospho-alpha-D-ribose 1-diphosphate: step 7/9.</text>
</comment>
<comment type="subunit">
    <text evidence="1">Homodimer.</text>
</comment>
<comment type="similarity">
    <text evidence="1">Belongs to the class-II pyridoxal-phosphate-dependent aminotransferase family. Histidinol-phosphate aminotransferase subfamily.</text>
</comment>
<keyword id="KW-0028">Amino-acid biosynthesis</keyword>
<keyword id="KW-0032">Aminotransferase</keyword>
<keyword id="KW-0368">Histidine biosynthesis</keyword>
<keyword id="KW-0663">Pyridoxal phosphate</keyword>
<keyword id="KW-0808">Transferase</keyword>
<accession>B0VV21</accession>
<reference key="1">
    <citation type="journal article" date="2008" name="PLoS ONE">
        <title>Comparative analysis of Acinetobacters: three genomes for three lifestyles.</title>
        <authorList>
            <person name="Vallenet D."/>
            <person name="Nordmann P."/>
            <person name="Barbe V."/>
            <person name="Poirel L."/>
            <person name="Mangenot S."/>
            <person name="Bataille E."/>
            <person name="Dossat C."/>
            <person name="Gas S."/>
            <person name="Kreimeyer A."/>
            <person name="Lenoble P."/>
            <person name="Oztas S."/>
            <person name="Poulain J."/>
            <person name="Segurens B."/>
            <person name="Robert C."/>
            <person name="Abergel C."/>
            <person name="Claverie J.-M."/>
            <person name="Raoult D."/>
            <person name="Medigue C."/>
            <person name="Weissenbach J."/>
            <person name="Cruveiller S."/>
        </authorList>
    </citation>
    <scope>NUCLEOTIDE SEQUENCE [LARGE SCALE GENOMIC DNA]</scope>
    <source>
        <strain>SDF</strain>
    </source>
</reference>
<feature type="chain" id="PRO_1000135379" description="Histidinol-phosphate aminotransferase">
    <location>
        <begin position="1"/>
        <end position="361"/>
    </location>
</feature>
<feature type="modified residue" description="N6-(pyridoxal phosphate)lysine" evidence="1">
    <location>
        <position position="219"/>
    </location>
</feature>
<dbReference type="EC" id="2.6.1.9" evidence="1"/>
<dbReference type="EMBL" id="CU468230">
    <property type="protein sequence ID" value="CAP02134.1"/>
    <property type="molecule type" value="Genomic_DNA"/>
</dbReference>
<dbReference type="SMR" id="B0VV21"/>
<dbReference type="KEGG" id="abm:ABSDF2838"/>
<dbReference type="HOGENOM" id="CLU_017584_3_0_6"/>
<dbReference type="UniPathway" id="UPA00031">
    <property type="reaction ID" value="UER00012"/>
</dbReference>
<dbReference type="Proteomes" id="UP000001741">
    <property type="component" value="Chromosome"/>
</dbReference>
<dbReference type="GO" id="GO:0004400">
    <property type="term" value="F:histidinol-phosphate transaminase activity"/>
    <property type="evidence" value="ECO:0007669"/>
    <property type="project" value="UniProtKB-UniRule"/>
</dbReference>
<dbReference type="GO" id="GO:0030170">
    <property type="term" value="F:pyridoxal phosphate binding"/>
    <property type="evidence" value="ECO:0007669"/>
    <property type="project" value="InterPro"/>
</dbReference>
<dbReference type="GO" id="GO:0000105">
    <property type="term" value="P:L-histidine biosynthetic process"/>
    <property type="evidence" value="ECO:0007669"/>
    <property type="project" value="UniProtKB-UniRule"/>
</dbReference>
<dbReference type="CDD" id="cd00609">
    <property type="entry name" value="AAT_like"/>
    <property type="match status" value="1"/>
</dbReference>
<dbReference type="Gene3D" id="3.90.1150.10">
    <property type="entry name" value="Aspartate Aminotransferase, domain 1"/>
    <property type="match status" value="1"/>
</dbReference>
<dbReference type="Gene3D" id="3.40.640.10">
    <property type="entry name" value="Type I PLP-dependent aspartate aminotransferase-like (Major domain)"/>
    <property type="match status" value="1"/>
</dbReference>
<dbReference type="HAMAP" id="MF_01023">
    <property type="entry name" value="HisC_aminotrans_2"/>
    <property type="match status" value="1"/>
</dbReference>
<dbReference type="InterPro" id="IPR004839">
    <property type="entry name" value="Aminotransferase_I/II_large"/>
</dbReference>
<dbReference type="InterPro" id="IPR005861">
    <property type="entry name" value="HisP_aminotrans"/>
</dbReference>
<dbReference type="InterPro" id="IPR050106">
    <property type="entry name" value="HistidinolP_aminotransfase"/>
</dbReference>
<dbReference type="InterPro" id="IPR015424">
    <property type="entry name" value="PyrdxlP-dep_Trfase"/>
</dbReference>
<dbReference type="InterPro" id="IPR015421">
    <property type="entry name" value="PyrdxlP-dep_Trfase_major"/>
</dbReference>
<dbReference type="InterPro" id="IPR015422">
    <property type="entry name" value="PyrdxlP-dep_Trfase_small"/>
</dbReference>
<dbReference type="NCBIfam" id="TIGR01141">
    <property type="entry name" value="hisC"/>
    <property type="match status" value="1"/>
</dbReference>
<dbReference type="PANTHER" id="PTHR43643:SF3">
    <property type="entry name" value="HISTIDINOL-PHOSPHATE AMINOTRANSFERASE"/>
    <property type="match status" value="1"/>
</dbReference>
<dbReference type="PANTHER" id="PTHR43643">
    <property type="entry name" value="HISTIDINOL-PHOSPHATE AMINOTRANSFERASE 2"/>
    <property type="match status" value="1"/>
</dbReference>
<dbReference type="Pfam" id="PF00155">
    <property type="entry name" value="Aminotran_1_2"/>
    <property type="match status" value="1"/>
</dbReference>
<dbReference type="SUPFAM" id="SSF53383">
    <property type="entry name" value="PLP-dependent transferases"/>
    <property type="match status" value="1"/>
</dbReference>
<evidence type="ECO:0000255" key="1">
    <source>
        <dbReference type="HAMAP-Rule" id="MF_01023"/>
    </source>
</evidence>
<proteinExistence type="inferred from homology"/>
<gene>
    <name evidence="1" type="primary">hisC</name>
    <name type="ordered locus">ABSDF2838</name>
</gene>
<protein>
    <recommendedName>
        <fullName evidence="1">Histidinol-phosphate aminotransferase</fullName>
        <ecNumber evidence="1">2.6.1.9</ecNumber>
    </recommendedName>
    <alternativeName>
        <fullName evidence="1">Imidazole acetol-phosphate transaminase</fullName>
    </alternativeName>
</protein>
<organism>
    <name type="scientific">Acinetobacter baumannii (strain SDF)</name>
    <dbReference type="NCBI Taxonomy" id="509170"/>
    <lineage>
        <taxon>Bacteria</taxon>
        <taxon>Pseudomonadati</taxon>
        <taxon>Pseudomonadota</taxon>
        <taxon>Gammaproteobacteria</taxon>
        <taxon>Moraxellales</taxon>
        <taxon>Moraxellaceae</taxon>
        <taxon>Acinetobacter</taxon>
        <taxon>Acinetobacter calcoaceticus/baumannii complex</taxon>
    </lineage>
</organism>